<proteinExistence type="evidence at protein level"/>
<name>NAC96_ARATH</name>
<evidence type="ECO:0000255" key="1">
    <source>
        <dbReference type="PROSITE-ProRule" id="PRU00353"/>
    </source>
</evidence>
<evidence type="ECO:0000256" key="2">
    <source>
        <dbReference type="SAM" id="MobiDB-lite"/>
    </source>
</evidence>
<evidence type="ECO:0000269" key="3">
    <source>
    </source>
</evidence>
<evidence type="ECO:0000269" key="4">
    <source>
    </source>
</evidence>
<evidence type="ECO:0000303" key="5">
    <source>
    </source>
</evidence>
<evidence type="ECO:0000305" key="6"/>
<evidence type="ECO:0000312" key="7">
    <source>
        <dbReference type="Araport" id="AT5G46590"/>
    </source>
</evidence>
<evidence type="ECO:0000312" key="8">
    <source>
        <dbReference type="EMBL" id="BAA97530.1"/>
    </source>
</evidence>
<gene>
    <name evidence="6" type="primary">NAC096</name>
    <name evidence="7" type="ordered locus">At5g46590</name>
    <name evidence="8" type="ORF">F10E10.6</name>
</gene>
<keyword id="KW-0238">DNA-binding</keyword>
<keyword id="KW-0539">Nucleus</keyword>
<keyword id="KW-1185">Reference proteome</keyword>
<keyword id="KW-0346">Stress response</keyword>
<keyword id="KW-0804">Transcription</keyword>
<keyword id="KW-0805">Transcription regulation</keyword>
<comment type="function">
    <text evidence="3 4">Transcriptional activator involved in the positive regulation of abscisic acid (ABA) responsive genes. Acts as a positive factor of ABA-mediated responses. Involved in the transcriptional activation of ABA-inducible genes in response to dehydration and osmotic stresses. Plays a positive role in both stomatal closure and water loss under dehydration stress conditions. Acts synergistically with ABF2 to activate the dehydration stress-response factor RD29A transcription. Binds to the consensus core cis-acting elements 5'-CGTA-3' and 5'-CACG-3' at the RD29A promoter (PubMed:24285786). Involved in hypocotyl graft union formation. Required for the auxin-mediated promotion of vascular tissue proliferation during hypocotyl graft attachment (PubMed:25182467).</text>
</comment>
<comment type="subunit">
    <text evidence="3">Interacts with ABF2 and ABF4.</text>
</comment>
<comment type="interaction">
    <interactant intactId="EBI-1238916">
        <id>Q9LS24</id>
    </interactant>
    <interactant intactId="EBI-2363244">
        <id>Q9FJ49</id>
        <label>PYL12</label>
    </interactant>
    <organismsDiffer>false</organismsDiffer>
    <experiments>3</experiments>
</comment>
<comment type="interaction">
    <interactant intactId="EBI-1238916">
        <id>Q9LS24</id>
    </interactant>
    <interactant intactId="EBI-2363192">
        <id>Q8S8E3</id>
        <label>PYL6</label>
    </interactant>
    <organismsDiffer>false</organismsDiffer>
    <experiments>3</experiments>
</comment>
<comment type="subcellular location">
    <subcellularLocation>
        <location evidence="1 3">Nucleus</location>
    </subcellularLocation>
</comment>
<comment type="tissue specificity">
    <text evidence="3">Expressed in roots, rosettes leaves, cauline leaves and stems.</text>
</comment>
<comment type="induction">
    <text evidence="3">Induced by abscisic acid (ABA), dehydration and osmotic stress.</text>
</comment>
<comment type="domain">
    <text evidence="1">The NAC domain includes a DNA binding domain and a dimerization domain.</text>
</comment>
<comment type="disruption phenotype">
    <text evidence="3">No visible phenotype under normal growth conditions, but mutant seedlings are hyposensitive to growth inhibition mediated by abscisic acid (ABA), and show decreased resistance to dehydration stress.</text>
</comment>
<organism>
    <name type="scientific">Arabidopsis thaliana</name>
    <name type="common">Mouse-ear cress</name>
    <dbReference type="NCBI Taxonomy" id="3702"/>
    <lineage>
        <taxon>Eukaryota</taxon>
        <taxon>Viridiplantae</taxon>
        <taxon>Streptophyta</taxon>
        <taxon>Embryophyta</taxon>
        <taxon>Tracheophyta</taxon>
        <taxon>Spermatophyta</taxon>
        <taxon>Magnoliopsida</taxon>
        <taxon>eudicotyledons</taxon>
        <taxon>Gunneridae</taxon>
        <taxon>Pentapetalae</taxon>
        <taxon>rosids</taxon>
        <taxon>malvids</taxon>
        <taxon>Brassicales</taxon>
        <taxon>Brassicaceae</taxon>
        <taxon>Camelineae</taxon>
        <taxon>Arabidopsis</taxon>
    </lineage>
</organism>
<accession>Q9LS24</accession>
<dbReference type="EMBL" id="AB028605">
    <property type="protein sequence ID" value="BAA97530.1"/>
    <property type="molecule type" value="Genomic_DNA"/>
</dbReference>
<dbReference type="EMBL" id="CP002688">
    <property type="protein sequence ID" value="AED95401.1"/>
    <property type="molecule type" value="Genomic_DNA"/>
</dbReference>
<dbReference type="EMBL" id="BT020305">
    <property type="protein sequence ID" value="AAV85660.1"/>
    <property type="molecule type" value="mRNA"/>
</dbReference>
<dbReference type="EMBL" id="BT020555">
    <property type="protein sequence ID" value="AAW70401.1"/>
    <property type="molecule type" value="mRNA"/>
</dbReference>
<dbReference type="EMBL" id="AB493778">
    <property type="protein sequence ID" value="BAH30616.1"/>
    <property type="molecule type" value="mRNA"/>
</dbReference>
<dbReference type="RefSeq" id="NP_199471.1">
    <property type="nucleotide sequence ID" value="NM_124029.3"/>
</dbReference>
<dbReference type="SMR" id="Q9LS24"/>
<dbReference type="FunCoup" id="Q9LS24">
    <property type="interactions" value="5"/>
</dbReference>
<dbReference type="IntAct" id="Q9LS24">
    <property type="interactions" value="3"/>
</dbReference>
<dbReference type="STRING" id="3702.Q9LS24"/>
<dbReference type="PaxDb" id="3702-AT5G46590.1"/>
<dbReference type="EnsemblPlants" id="AT5G46590.1">
    <property type="protein sequence ID" value="AT5G46590.1"/>
    <property type="gene ID" value="AT5G46590"/>
</dbReference>
<dbReference type="GeneID" id="834702"/>
<dbReference type="Gramene" id="AT5G46590.1">
    <property type="protein sequence ID" value="AT5G46590.1"/>
    <property type="gene ID" value="AT5G46590"/>
</dbReference>
<dbReference type="KEGG" id="ath:AT5G46590"/>
<dbReference type="Araport" id="AT5G46590"/>
<dbReference type="TAIR" id="AT5G46590">
    <property type="gene designation" value="NAC096"/>
</dbReference>
<dbReference type="eggNOG" id="ENOG502QPKD">
    <property type="taxonomic scope" value="Eukaryota"/>
</dbReference>
<dbReference type="HOGENOM" id="CLU_035664_9_1_1"/>
<dbReference type="InParanoid" id="Q9LS24"/>
<dbReference type="OMA" id="YPNKESH"/>
<dbReference type="OrthoDB" id="1931139at2759"/>
<dbReference type="PhylomeDB" id="Q9LS24"/>
<dbReference type="PRO" id="PR:Q9LS24"/>
<dbReference type="Proteomes" id="UP000006548">
    <property type="component" value="Chromosome 5"/>
</dbReference>
<dbReference type="ExpressionAtlas" id="Q9LS24">
    <property type="expression patterns" value="baseline and differential"/>
</dbReference>
<dbReference type="GO" id="GO:0005634">
    <property type="term" value="C:nucleus"/>
    <property type="evidence" value="ECO:0000314"/>
    <property type="project" value="UniProtKB"/>
</dbReference>
<dbReference type="GO" id="GO:0003677">
    <property type="term" value="F:DNA binding"/>
    <property type="evidence" value="ECO:0007669"/>
    <property type="project" value="UniProtKB-KW"/>
</dbReference>
<dbReference type="GO" id="GO:0003700">
    <property type="term" value="F:DNA-binding transcription factor activity"/>
    <property type="evidence" value="ECO:0000314"/>
    <property type="project" value="UniProtKB"/>
</dbReference>
<dbReference type="GO" id="GO:0009789">
    <property type="term" value="P:positive regulation of abscisic acid-activated signaling pathway"/>
    <property type="evidence" value="ECO:0000315"/>
    <property type="project" value="UniProtKB"/>
</dbReference>
<dbReference type="GO" id="GO:0009611">
    <property type="term" value="P:response to wounding"/>
    <property type="evidence" value="ECO:0000270"/>
    <property type="project" value="TAIR"/>
</dbReference>
<dbReference type="FunFam" id="2.170.150.80:FF:000002">
    <property type="entry name" value="Nac domain-containing protein 86"/>
    <property type="match status" value="1"/>
</dbReference>
<dbReference type="Gene3D" id="2.170.150.80">
    <property type="entry name" value="NAC domain"/>
    <property type="match status" value="1"/>
</dbReference>
<dbReference type="InterPro" id="IPR003441">
    <property type="entry name" value="NAC-dom"/>
</dbReference>
<dbReference type="InterPro" id="IPR036093">
    <property type="entry name" value="NAC_dom_sf"/>
</dbReference>
<dbReference type="PANTHER" id="PTHR31744:SF208">
    <property type="entry name" value="(WILD MALAYSIAN BANANA) HYPOTHETICAL PROTEIN"/>
    <property type="match status" value="1"/>
</dbReference>
<dbReference type="PANTHER" id="PTHR31744">
    <property type="entry name" value="PROTEIN CUP-SHAPED COTYLEDON 2-RELATED"/>
    <property type="match status" value="1"/>
</dbReference>
<dbReference type="Pfam" id="PF02365">
    <property type="entry name" value="NAM"/>
    <property type="match status" value="1"/>
</dbReference>
<dbReference type="SUPFAM" id="SSF101941">
    <property type="entry name" value="NAC domain"/>
    <property type="match status" value="1"/>
</dbReference>
<dbReference type="PROSITE" id="PS51005">
    <property type="entry name" value="NAC"/>
    <property type="match status" value="1"/>
</dbReference>
<reference key="1">
    <citation type="submission" date="1999-06" db="EMBL/GenBank/DDBJ databases">
        <title>Structural analysis of Arabidopsis thaliana chromosome 5. XI.</title>
        <authorList>
            <person name="Kaneko T."/>
            <person name="Katoh T."/>
            <person name="Asamizu E."/>
            <person name="Sato S."/>
            <person name="Nakamura Y."/>
            <person name="Kotani H."/>
            <person name="Tabata S."/>
        </authorList>
    </citation>
    <scope>NUCLEOTIDE SEQUENCE [LARGE SCALE GENOMIC DNA]</scope>
    <source>
        <strain>cv. Columbia</strain>
    </source>
</reference>
<reference key="2">
    <citation type="journal article" date="2017" name="Plant J.">
        <title>Araport11: a complete reannotation of the Arabidopsis thaliana reference genome.</title>
        <authorList>
            <person name="Cheng C.Y."/>
            <person name="Krishnakumar V."/>
            <person name="Chan A.P."/>
            <person name="Thibaud-Nissen F."/>
            <person name="Schobel S."/>
            <person name="Town C.D."/>
        </authorList>
    </citation>
    <scope>GENOME REANNOTATION</scope>
    <source>
        <strain>cv. Columbia</strain>
    </source>
</reference>
<reference key="3">
    <citation type="submission" date="2005-01" db="EMBL/GenBank/DDBJ databases">
        <title>Arabidopsis ORF clones.</title>
        <authorList>
            <person name="Kim C.J."/>
            <person name="Chen H."/>
            <person name="Cheuk R.F."/>
            <person name="Shinn P."/>
            <person name="Ecker J.R."/>
        </authorList>
    </citation>
    <scope>NUCLEOTIDE SEQUENCE [LARGE SCALE MRNA]</scope>
    <source>
        <strain>cv. Columbia</strain>
    </source>
</reference>
<reference key="4">
    <citation type="submission" date="2009-03" db="EMBL/GenBank/DDBJ databases">
        <title>ORF cloning and analysis of Arabidopsis transcription factor genes.</title>
        <authorList>
            <person name="Fujita M."/>
            <person name="Mizukado S."/>
            <person name="Seki M."/>
            <person name="Shinozaki K."/>
            <person name="Mitsuda N."/>
            <person name="Takiguchi Y."/>
            <person name="Takagi M."/>
        </authorList>
    </citation>
    <scope>NUCLEOTIDE SEQUENCE [LARGE SCALE MRNA]</scope>
</reference>
<reference key="5">
    <citation type="journal article" date="2003" name="DNA Res.">
        <title>Comprehensive analysis of NAC family genes in Oryza sativa and Arabidopsis thaliana.</title>
        <authorList>
            <person name="Ooka H."/>
            <person name="Satoh K."/>
            <person name="Doi K."/>
            <person name="Nagata T."/>
            <person name="Otomo Y."/>
            <person name="Murakami K."/>
            <person name="Matsubara K."/>
            <person name="Osato N."/>
            <person name="Kawai J."/>
            <person name="Carninci P."/>
            <person name="Hayashizaki Y."/>
            <person name="Suzuki K."/>
            <person name="Kojima K."/>
            <person name="Takahara Y."/>
            <person name="Yamamoto K."/>
            <person name="Kikuchi S."/>
        </authorList>
    </citation>
    <scope>GENE FAMILY</scope>
    <scope>NOMENCLATURE</scope>
</reference>
<reference key="6">
    <citation type="journal article" date="2013" name="Plant Cell">
        <title>The Arabidopsis NAC transcription factor ANAC096 cooperates with bZIP-type transcription factors in dehydration and osmotic stress responses.</title>
        <authorList>
            <person name="Xu Z.Y."/>
            <person name="Kim S.Y."/>
            <person name="Hyeon D.Y."/>
            <person name="Kim D.H."/>
            <person name="Dong T."/>
            <person name="Park Y."/>
            <person name="Jin J.B."/>
            <person name="Joo S.H."/>
            <person name="Kim S.K."/>
            <person name="Hong J.C."/>
            <person name="Hwang D."/>
            <person name="Hwang I."/>
        </authorList>
    </citation>
    <scope>FUNCTION</scope>
    <scope>INTERACTION WITH ABF2 AND ABF4</scope>
    <scope>SUBCELLULAR LOCATION</scope>
    <scope>TISSUE SPECIFICITY</scope>
    <scope>INDUCTION</scope>
    <scope>DISRUPTION PHENOTYPE</scope>
</reference>
<reference key="7">
    <citation type="journal article" date="2014" name="Plant J.">
        <title>XTH20 and XTH19 regulated by ANAC071 under auxin flow are involved in cell proliferation in incised Arabidopsis inflorescence stems.</title>
        <authorList>
            <person name="Pitaksaringkarn W."/>
            <person name="Matsuoka K."/>
            <person name="Asahina M."/>
            <person name="Miura K."/>
            <person name="Sage-Ono K."/>
            <person name="Ono M."/>
            <person name="Yokoyama R."/>
            <person name="Nishitani K."/>
            <person name="Ishii T."/>
            <person name="Iwai H."/>
            <person name="Satoh S."/>
        </authorList>
    </citation>
    <scope>FUNCTION</scope>
</reference>
<protein>
    <recommendedName>
        <fullName evidence="5">NAC domain-containing protein 96</fullName>
        <shortName evidence="5">ANAC096</shortName>
    </recommendedName>
</protein>
<feature type="chain" id="PRO_0000439705" description="NAC domain-containing protein 96">
    <location>
        <begin position="1"/>
        <end position="292"/>
    </location>
</feature>
<feature type="domain" description="NAC" evidence="1">
    <location>
        <begin position="6"/>
        <end position="158"/>
    </location>
</feature>
<feature type="DNA-binding region" evidence="1">
    <location>
        <begin position="106"/>
        <end position="164"/>
    </location>
</feature>
<feature type="region of interest" description="Disordered" evidence="2">
    <location>
        <begin position="171"/>
        <end position="199"/>
    </location>
</feature>
<feature type="compositionally biased region" description="Polar residues" evidence="2">
    <location>
        <begin position="172"/>
        <end position="191"/>
    </location>
</feature>
<sequence>MGSSCLPPGFRFHPTDEELIEYYLKRKVEGLEIELEVIPVIDLYSFDPWELPDKSFLPNRDMEWYFFCSRDKKYPNGFRTNRGTKAGYWKATGKDRKITSRSSSIIGYRKTLVFYKGRAPLGDRSNWIMHEYRLCDDDTSQGSQNLKGAFVLCRVAMKNEIKTNTKIRKIPSEQTIGSGESSGLSSRVTSPSRDETMPFHSFANPVSTETDSSNIWISPEFILDSSKDYPQIQDVASQCFQQDFDFPIIGNQNMEFPASTSLDQNMDEFMQNGYWTNYGYDQTGLFGYSDFS</sequence>